<accession>Q8KDH2</accession>
<proteinExistence type="inferred from homology"/>
<gene>
    <name evidence="1" type="primary">lipA</name>
    <name type="ordered locus">CT1078</name>
</gene>
<name>LIPA_CHLTE</name>
<keyword id="KW-0004">4Fe-4S</keyword>
<keyword id="KW-0963">Cytoplasm</keyword>
<keyword id="KW-0408">Iron</keyword>
<keyword id="KW-0411">Iron-sulfur</keyword>
<keyword id="KW-0479">Metal-binding</keyword>
<keyword id="KW-1185">Reference proteome</keyword>
<keyword id="KW-0949">S-adenosyl-L-methionine</keyword>
<keyword id="KW-0808">Transferase</keyword>
<comment type="function">
    <text evidence="1">Catalyzes the radical-mediated insertion of two sulfur atoms into the C-6 and C-8 positions of the octanoyl moiety bound to the lipoyl domains of lipoate-dependent enzymes, thereby converting the octanoylated domains into lipoylated derivatives.</text>
</comment>
<comment type="catalytic activity">
    <reaction evidence="1">
        <text>[[Fe-S] cluster scaffold protein carrying a second [4Fe-4S](2+) cluster] + N(6)-octanoyl-L-lysyl-[protein] + 2 oxidized [2Fe-2S]-[ferredoxin] + 2 S-adenosyl-L-methionine + 4 H(+) = [[Fe-S] cluster scaffold protein] + N(6)-[(R)-dihydrolipoyl]-L-lysyl-[protein] + 4 Fe(3+) + 2 hydrogen sulfide + 2 5'-deoxyadenosine + 2 L-methionine + 2 reduced [2Fe-2S]-[ferredoxin]</text>
        <dbReference type="Rhea" id="RHEA:16585"/>
        <dbReference type="Rhea" id="RHEA-COMP:9928"/>
        <dbReference type="Rhea" id="RHEA-COMP:10000"/>
        <dbReference type="Rhea" id="RHEA-COMP:10001"/>
        <dbReference type="Rhea" id="RHEA-COMP:10475"/>
        <dbReference type="Rhea" id="RHEA-COMP:14568"/>
        <dbReference type="Rhea" id="RHEA-COMP:14569"/>
        <dbReference type="ChEBI" id="CHEBI:15378"/>
        <dbReference type="ChEBI" id="CHEBI:17319"/>
        <dbReference type="ChEBI" id="CHEBI:29034"/>
        <dbReference type="ChEBI" id="CHEBI:29919"/>
        <dbReference type="ChEBI" id="CHEBI:33722"/>
        <dbReference type="ChEBI" id="CHEBI:33737"/>
        <dbReference type="ChEBI" id="CHEBI:33738"/>
        <dbReference type="ChEBI" id="CHEBI:57844"/>
        <dbReference type="ChEBI" id="CHEBI:59789"/>
        <dbReference type="ChEBI" id="CHEBI:78809"/>
        <dbReference type="ChEBI" id="CHEBI:83100"/>
        <dbReference type="EC" id="2.8.1.8"/>
    </reaction>
</comment>
<comment type="cofactor">
    <cofactor evidence="1">
        <name>[4Fe-4S] cluster</name>
        <dbReference type="ChEBI" id="CHEBI:49883"/>
    </cofactor>
    <text evidence="1">Binds 2 [4Fe-4S] clusters per subunit. One cluster is coordinated with 3 cysteines and an exchangeable S-adenosyl-L-methionine.</text>
</comment>
<comment type="pathway">
    <text evidence="1">Protein modification; protein lipoylation via endogenous pathway; protein N(6)-(lipoyl)lysine from octanoyl-[acyl-carrier-protein]: step 2/2.</text>
</comment>
<comment type="subcellular location">
    <subcellularLocation>
        <location evidence="1">Cytoplasm</location>
    </subcellularLocation>
</comment>
<comment type="similarity">
    <text evidence="1">Belongs to the radical SAM superfamily. Lipoyl synthase family.</text>
</comment>
<protein>
    <recommendedName>
        <fullName evidence="1">Lipoyl synthase</fullName>
        <ecNumber evidence="1">2.8.1.8</ecNumber>
    </recommendedName>
    <alternativeName>
        <fullName evidence="1">Lip-syn</fullName>
        <shortName evidence="1">LS</shortName>
    </alternativeName>
    <alternativeName>
        <fullName evidence="1">Lipoate synthase</fullName>
    </alternativeName>
    <alternativeName>
        <fullName evidence="1">Lipoic acid synthase</fullName>
    </alternativeName>
    <alternativeName>
        <fullName evidence="1">Sulfur insertion protein LipA</fullName>
    </alternativeName>
</protein>
<sequence>MNSGPGKKPDWLKIKLASGSSFASTRKLLNRHSLHTVCRSAMCPNLHECWSKGTATFLLLGNVCTRSCRFCAVGTECRPAMPDPEEPSKIAEAVKTMKLRHAVLTSVNRDDLADGGATHWVETIRAIREVNPGVSLECLIPDFSGNEQSLDLVMQELPEVLNHNIETVPSRYAAVRPQALYERSLAVIERAKRQFRLATKSGMMVGMGETEEELEASLHDLRGHGCDMVTIGQYLQPTAAHLPVSRYVTPEEFERYREIALDAGFRHVQSGPFVRSSYHAEAFEPVEKIS</sequence>
<dbReference type="EC" id="2.8.1.8" evidence="1"/>
<dbReference type="EMBL" id="AE006470">
    <property type="protein sequence ID" value="AAM72311.1"/>
    <property type="molecule type" value="Genomic_DNA"/>
</dbReference>
<dbReference type="RefSeq" id="NP_661969.1">
    <property type="nucleotide sequence ID" value="NC_002932.3"/>
</dbReference>
<dbReference type="RefSeq" id="WP_010932756.1">
    <property type="nucleotide sequence ID" value="NC_002932.3"/>
</dbReference>
<dbReference type="SMR" id="Q8KDH2"/>
<dbReference type="STRING" id="194439.CT1078"/>
<dbReference type="DNASU" id="1006936"/>
<dbReference type="EnsemblBacteria" id="AAM72311">
    <property type="protein sequence ID" value="AAM72311"/>
    <property type="gene ID" value="CT1078"/>
</dbReference>
<dbReference type="KEGG" id="cte:CT1078"/>
<dbReference type="PATRIC" id="fig|194439.7.peg.985"/>
<dbReference type="eggNOG" id="COG0320">
    <property type="taxonomic scope" value="Bacteria"/>
</dbReference>
<dbReference type="HOGENOM" id="CLU_033144_2_1_10"/>
<dbReference type="OrthoDB" id="9787898at2"/>
<dbReference type="UniPathway" id="UPA00538">
    <property type="reaction ID" value="UER00593"/>
</dbReference>
<dbReference type="Proteomes" id="UP000001007">
    <property type="component" value="Chromosome"/>
</dbReference>
<dbReference type="GO" id="GO:0005737">
    <property type="term" value="C:cytoplasm"/>
    <property type="evidence" value="ECO:0007669"/>
    <property type="project" value="UniProtKB-SubCell"/>
</dbReference>
<dbReference type="GO" id="GO:0051539">
    <property type="term" value="F:4 iron, 4 sulfur cluster binding"/>
    <property type="evidence" value="ECO:0007669"/>
    <property type="project" value="UniProtKB-UniRule"/>
</dbReference>
<dbReference type="GO" id="GO:0016992">
    <property type="term" value="F:lipoate synthase activity"/>
    <property type="evidence" value="ECO:0007669"/>
    <property type="project" value="UniProtKB-UniRule"/>
</dbReference>
<dbReference type="GO" id="GO:0046872">
    <property type="term" value="F:metal ion binding"/>
    <property type="evidence" value="ECO:0007669"/>
    <property type="project" value="UniProtKB-KW"/>
</dbReference>
<dbReference type="FunFam" id="3.20.20.70:FF:000040">
    <property type="entry name" value="Lipoyl synthase"/>
    <property type="match status" value="1"/>
</dbReference>
<dbReference type="Gene3D" id="3.20.20.70">
    <property type="entry name" value="Aldolase class I"/>
    <property type="match status" value="1"/>
</dbReference>
<dbReference type="HAMAP" id="MF_00206">
    <property type="entry name" value="Lipoyl_synth"/>
    <property type="match status" value="1"/>
</dbReference>
<dbReference type="InterPro" id="IPR013785">
    <property type="entry name" value="Aldolase_TIM"/>
</dbReference>
<dbReference type="InterPro" id="IPR006638">
    <property type="entry name" value="Elp3/MiaA/NifB-like_rSAM"/>
</dbReference>
<dbReference type="InterPro" id="IPR003698">
    <property type="entry name" value="Lipoyl_synth"/>
</dbReference>
<dbReference type="InterPro" id="IPR007197">
    <property type="entry name" value="rSAM"/>
</dbReference>
<dbReference type="NCBIfam" id="TIGR00510">
    <property type="entry name" value="lipA"/>
    <property type="match status" value="1"/>
</dbReference>
<dbReference type="NCBIfam" id="NF004019">
    <property type="entry name" value="PRK05481.1"/>
    <property type="match status" value="1"/>
</dbReference>
<dbReference type="NCBIfam" id="NF009544">
    <property type="entry name" value="PRK12928.1"/>
    <property type="match status" value="1"/>
</dbReference>
<dbReference type="PANTHER" id="PTHR10949">
    <property type="entry name" value="LIPOYL SYNTHASE"/>
    <property type="match status" value="1"/>
</dbReference>
<dbReference type="PANTHER" id="PTHR10949:SF0">
    <property type="entry name" value="LIPOYL SYNTHASE, MITOCHONDRIAL"/>
    <property type="match status" value="1"/>
</dbReference>
<dbReference type="Pfam" id="PF04055">
    <property type="entry name" value="Radical_SAM"/>
    <property type="match status" value="1"/>
</dbReference>
<dbReference type="PIRSF" id="PIRSF005963">
    <property type="entry name" value="Lipoyl_synth"/>
    <property type="match status" value="1"/>
</dbReference>
<dbReference type="SFLD" id="SFLDF00271">
    <property type="entry name" value="lipoyl_synthase"/>
    <property type="match status" value="1"/>
</dbReference>
<dbReference type="SFLD" id="SFLDG01058">
    <property type="entry name" value="lipoyl_synthase_like"/>
    <property type="match status" value="1"/>
</dbReference>
<dbReference type="SMART" id="SM00729">
    <property type="entry name" value="Elp3"/>
    <property type="match status" value="1"/>
</dbReference>
<dbReference type="SUPFAM" id="SSF102114">
    <property type="entry name" value="Radical SAM enzymes"/>
    <property type="match status" value="1"/>
</dbReference>
<dbReference type="PROSITE" id="PS51918">
    <property type="entry name" value="RADICAL_SAM"/>
    <property type="match status" value="1"/>
</dbReference>
<feature type="chain" id="PRO_0000102305" description="Lipoyl synthase">
    <location>
        <begin position="1"/>
        <end position="290"/>
    </location>
</feature>
<feature type="domain" description="Radical SAM core" evidence="2">
    <location>
        <begin position="50"/>
        <end position="266"/>
    </location>
</feature>
<feature type="binding site" evidence="1">
    <location>
        <position position="38"/>
    </location>
    <ligand>
        <name>[4Fe-4S] cluster</name>
        <dbReference type="ChEBI" id="CHEBI:49883"/>
        <label>1</label>
    </ligand>
</feature>
<feature type="binding site" evidence="1">
    <location>
        <position position="43"/>
    </location>
    <ligand>
        <name>[4Fe-4S] cluster</name>
        <dbReference type="ChEBI" id="CHEBI:49883"/>
        <label>1</label>
    </ligand>
</feature>
<feature type="binding site" evidence="1">
    <location>
        <position position="49"/>
    </location>
    <ligand>
        <name>[4Fe-4S] cluster</name>
        <dbReference type="ChEBI" id="CHEBI:49883"/>
        <label>1</label>
    </ligand>
</feature>
<feature type="binding site" evidence="1">
    <location>
        <position position="64"/>
    </location>
    <ligand>
        <name>[4Fe-4S] cluster</name>
        <dbReference type="ChEBI" id="CHEBI:49883"/>
        <label>2</label>
        <note>4Fe-4S-S-AdoMet</note>
    </ligand>
</feature>
<feature type="binding site" evidence="1">
    <location>
        <position position="68"/>
    </location>
    <ligand>
        <name>[4Fe-4S] cluster</name>
        <dbReference type="ChEBI" id="CHEBI:49883"/>
        <label>2</label>
        <note>4Fe-4S-S-AdoMet</note>
    </ligand>
</feature>
<feature type="binding site" evidence="1">
    <location>
        <position position="71"/>
    </location>
    <ligand>
        <name>[4Fe-4S] cluster</name>
        <dbReference type="ChEBI" id="CHEBI:49883"/>
        <label>2</label>
        <note>4Fe-4S-S-AdoMet</note>
    </ligand>
</feature>
<feature type="binding site" evidence="1">
    <location>
        <position position="277"/>
    </location>
    <ligand>
        <name>[4Fe-4S] cluster</name>
        <dbReference type="ChEBI" id="CHEBI:49883"/>
        <label>1</label>
    </ligand>
</feature>
<organism>
    <name type="scientific">Chlorobaculum tepidum (strain ATCC 49652 / DSM 12025 / NBRC 103806 / TLS)</name>
    <name type="common">Chlorobium tepidum</name>
    <dbReference type="NCBI Taxonomy" id="194439"/>
    <lineage>
        <taxon>Bacteria</taxon>
        <taxon>Pseudomonadati</taxon>
        <taxon>Chlorobiota</taxon>
        <taxon>Chlorobiia</taxon>
        <taxon>Chlorobiales</taxon>
        <taxon>Chlorobiaceae</taxon>
        <taxon>Chlorobaculum</taxon>
    </lineage>
</organism>
<evidence type="ECO:0000255" key="1">
    <source>
        <dbReference type="HAMAP-Rule" id="MF_00206"/>
    </source>
</evidence>
<evidence type="ECO:0000255" key="2">
    <source>
        <dbReference type="PROSITE-ProRule" id="PRU01266"/>
    </source>
</evidence>
<reference key="1">
    <citation type="journal article" date="2002" name="Proc. Natl. Acad. Sci. U.S.A.">
        <title>The complete genome sequence of Chlorobium tepidum TLS, a photosynthetic, anaerobic, green-sulfur bacterium.</title>
        <authorList>
            <person name="Eisen J.A."/>
            <person name="Nelson K.E."/>
            <person name="Paulsen I.T."/>
            <person name="Heidelberg J.F."/>
            <person name="Wu M."/>
            <person name="Dodson R.J."/>
            <person name="DeBoy R.T."/>
            <person name="Gwinn M.L."/>
            <person name="Nelson W.C."/>
            <person name="Haft D.H."/>
            <person name="Hickey E.K."/>
            <person name="Peterson J.D."/>
            <person name="Durkin A.S."/>
            <person name="Kolonay J.F."/>
            <person name="Yang F."/>
            <person name="Holt I.E."/>
            <person name="Umayam L.A."/>
            <person name="Mason T.M."/>
            <person name="Brenner M."/>
            <person name="Shea T.P."/>
            <person name="Parksey D.S."/>
            <person name="Nierman W.C."/>
            <person name="Feldblyum T.V."/>
            <person name="Hansen C.L."/>
            <person name="Craven M.B."/>
            <person name="Radune D."/>
            <person name="Vamathevan J.J."/>
            <person name="Khouri H.M."/>
            <person name="White O."/>
            <person name="Gruber T.M."/>
            <person name="Ketchum K.A."/>
            <person name="Venter J.C."/>
            <person name="Tettelin H."/>
            <person name="Bryant D.A."/>
            <person name="Fraser C.M."/>
        </authorList>
    </citation>
    <scope>NUCLEOTIDE SEQUENCE [LARGE SCALE GENOMIC DNA]</scope>
    <source>
        <strain>ATCC 49652 / DSM 12025 / NBRC 103806 / TLS</strain>
    </source>
</reference>